<accession>P65193</accession>
<accession>Q9PAS9</accession>
<evidence type="ECO:0000255" key="1">
    <source>
        <dbReference type="HAMAP-Rule" id="MF_00191"/>
    </source>
</evidence>
<gene>
    <name evidence="1" type="primary">ispH</name>
    <name type="synonym">lytB</name>
    <name type="ordered locus">XF_2416</name>
</gene>
<dbReference type="EC" id="1.17.7.4" evidence="1"/>
<dbReference type="EMBL" id="AE003849">
    <property type="protein sequence ID" value="AAF85215.1"/>
    <property type="molecule type" value="Genomic_DNA"/>
</dbReference>
<dbReference type="PIR" id="C82561">
    <property type="entry name" value="C82561"/>
</dbReference>
<dbReference type="RefSeq" id="WP_004088396.1">
    <property type="nucleotide sequence ID" value="NC_002488.3"/>
</dbReference>
<dbReference type="SMR" id="P65193"/>
<dbReference type="STRING" id="160492.XF_2416"/>
<dbReference type="GeneID" id="93905256"/>
<dbReference type="KEGG" id="xfa:XF_2416"/>
<dbReference type="eggNOG" id="COG0761">
    <property type="taxonomic scope" value="Bacteria"/>
</dbReference>
<dbReference type="HOGENOM" id="CLU_027486_1_0_6"/>
<dbReference type="UniPathway" id="UPA00056">
    <property type="reaction ID" value="UER00097"/>
</dbReference>
<dbReference type="UniPathway" id="UPA00059">
    <property type="reaction ID" value="UER00105"/>
</dbReference>
<dbReference type="Proteomes" id="UP000000812">
    <property type="component" value="Chromosome"/>
</dbReference>
<dbReference type="GO" id="GO:0051539">
    <property type="term" value="F:4 iron, 4 sulfur cluster binding"/>
    <property type="evidence" value="ECO:0007669"/>
    <property type="project" value="UniProtKB-UniRule"/>
</dbReference>
<dbReference type="GO" id="GO:0051745">
    <property type="term" value="F:4-hydroxy-3-methylbut-2-enyl diphosphate reductase activity"/>
    <property type="evidence" value="ECO:0007669"/>
    <property type="project" value="UniProtKB-UniRule"/>
</dbReference>
<dbReference type="GO" id="GO:0046872">
    <property type="term" value="F:metal ion binding"/>
    <property type="evidence" value="ECO:0007669"/>
    <property type="project" value="UniProtKB-KW"/>
</dbReference>
<dbReference type="GO" id="GO:0050992">
    <property type="term" value="P:dimethylallyl diphosphate biosynthetic process"/>
    <property type="evidence" value="ECO:0007669"/>
    <property type="project" value="UniProtKB-UniRule"/>
</dbReference>
<dbReference type="GO" id="GO:0019288">
    <property type="term" value="P:isopentenyl diphosphate biosynthetic process, methylerythritol 4-phosphate pathway"/>
    <property type="evidence" value="ECO:0007669"/>
    <property type="project" value="UniProtKB-UniRule"/>
</dbReference>
<dbReference type="GO" id="GO:0016114">
    <property type="term" value="P:terpenoid biosynthetic process"/>
    <property type="evidence" value="ECO:0007669"/>
    <property type="project" value="UniProtKB-UniRule"/>
</dbReference>
<dbReference type="CDD" id="cd13944">
    <property type="entry name" value="lytB_ispH"/>
    <property type="match status" value="1"/>
</dbReference>
<dbReference type="Gene3D" id="3.40.50.11270">
    <property type="match status" value="1"/>
</dbReference>
<dbReference type="Gene3D" id="3.40.1010.20">
    <property type="entry name" value="4-hydroxy-3-methylbut-2-enyl diphosphate reductase, catalytic domain"/>
    <property type="match status" value="2"/>
</dbReference>
<dbReference type="HAMAP" id="MF_00191">
    <property type="entry name" value="IspH"/>
    <property type="match status" value="1"/>
</dbReference>
<dbReference type="InterPro" id="IPR003451">
    <property type="entry name" value="LytB/IspH"/>
</dbReference>
<dbReference type="NCBIfam" id="TIGR00216">
    <property type="entry name" value="ispH_lytB"/>
    <property type="match status" value="1"/>
</dbReference>
<dbReference type="NCBIfam" id="NF002188">
    <property type="entry name" value="PRK01045.1-2"/>
    <property type="match status" value="1"/>
</dbReference>
<dbReference type="NCBIfam" id="NF002190">
    <property type="entry name" value="PRK01045.1-4"/>
    <property type="match status" value="1"/>
</dbReference>
<dbReference type="PANTHER" id="PTHR30426">
    <property type="entry name" value="4-HYDROXY-3-METHYLBUT-2-ENYL DIPHOSPHATE REDUCTASE"/>
    <property type="match status" value="1"/>
</dbReference>
<dbReference type="PANTHER" id="PTHR30426:SF0">
    <property type="entry name" value="4-HYDROXY-3-METHYLBUT-2-ENYL DIPHOSPHATE REDUCTASE"/>
    <property type="match status" value="1"/>
</dbReference>
<dbReference type="Pfam" id="PF02401">
    <property type="entry name" value="LYTB"/>
    <property type="match status" value="1"/>
</dbReference>
<feature type="chain" id="PRO_0000128901" description="4-hydroxy-3-methylbut-2-enyl diphosphate reductase">
    <location>
        <begin position="1"/>
        <end position="316"/>
    </location>
</feature>
<feature type="active site" description="Proton donor" evidence="1">
    <location>
        <position position="126"/>
    </location>
</feature>
<feature type="binding site" evidence="1">
    <location>
        <position position="12"/>
    </location>
    <ligand>
        <name>[4Fe-4S] cluster</name>
        <dbReference type="ChEBI" id="CHEBI:49883"/>
    </ligand>
</feature>
<feature type="binding site" evidence="1">
    <location>
        <position position="41"/>
    </location>
    <ligand>
        <name>(2E)-4-hydroxy-3-methylbut-2-enyl diphosphate</name>
        <dbReference type="ChEBI" id="CHEBI:128753"/>
    </ligand>
</feature>
<feature type="binding site" evidence="1">
    <location>
        <position position="41"/>
    </location>
    <ligand>
        <name>dimethylallyl diphosphate</name>
        <dbReference type="ChEBI" id="CHEBI:57623"/>
    </ligand>
</feature>
<feature type="binding site" evidence="1">
    <location>
        <position position="41"/>
    </location>
    <ligand>
        <name>isopentenyl diphosphate</name>
        <dbReference type="ChEBI" id="CHEBI:128769"/>
    </ligand>
</feature>
<feature type="binding site" evidence="1">
    <location>
        <position position="74"/>
    </location>
    <ligand>
        <name>(2E)-4-hydroxy-3-methylbut-2-enyl diphosphate</name>
        <dbReference type="ChEBI" id="CHEBI:128753"/>
    </ligand>
</feature>
<feature type="binding site" evidence="1">
    <location>
        <position position="74"/>
    </location>
    <ligand>
        <name>dimethylallyl diphosphate</name>
        <dbReference type="ChEBI" id="CHEBI:57623"/>
    </ligand>
</feature>
<feature type="binding site" evidence="1">
    <location>
        <position position="74"/>
    </location>
    <ligand>
        <name>isopentenyl diphosphate</name>
        <dbReference type="ChEBI" id="CHEBI:128769"/>
    </ligand>
</feature>
<feature type="binding site" evidence="1">
    <location>
        <position position="96"/>
    </location>
    <ligand>
        <name>[4Fe-4S] cluster</name>
        <dbReference type="ChEBI" id="CHEBI:49883"/>
    </ligand>
</feature>
<feature type="binding site" evidence="1">
    <location>
        <position position="124"/>
    </location>
    <ligand>
        <name>(2E)-4-hydroxy-3-methylbut-2-enyl diphosphate</name>
        <dbReference type="ChEBI" id="CHEBI:128753"/>
    </ligand>
</feature>
<feature type="binding site" evidence="1">
    <location>
        <position position="124"/>
    </location>
    <ligand>
        <name>dimethylallyl diphosphate</name>
        <dbReference type="ChEBI" id="CHEBI:57623"/>
    </ligand>
</feature>
<feature type="binding site" evidence="1">
    <location>
        <position position="124"/>
    </location>
    <ligand>
        <name>isopentenyl diphosphate</name>
        <dbReference type="ChEBI" id="CHEBI:128769"/>
    </ligand>
</feature>
<feature type="binding site" evidence="1">
    <location>
        <position position="169"/>
    </location>
    <ligand>
        <name>(2E)-4-hydroxy-3-methylbut-2-enyl diphosphate</name>
        <dbReference type="ChEBI" id="CHEBI:128753"/>
    </ligand>
</feature>
<feature type="binding site" evidence="1">
    <location>
        <position position="199"/>
    </location>
    <ligand>
        <name>[4Fe-4S] cluster</name>
        <dbReference type="ChEBI" id="CHEBI:49883"/>
    </ligand>
</feature>
<feature type="binding site" evidence="1">
    <location>
        <position position="227"/>
    </location>
    <ligand>
        <name>(2E)-4-hydroxy-3-methylbut-2-enyl diphosphate</name>
        <dbReference type="ChEBI" id="CHEBI:128753"/>
    </ligand>
</feature>
<feature type="binding site" evidence="1">
    <location>
        <position position="227"/>
    </location>
    <ligand>
        <name>dimethylallyl diphosphate</name>
        <dbReference type="ChEBI" id="CHEBI:57623"/>
    </ligand>
</feature>
<feature type="binding site" evidence="1">
    <location>
        <position position="227"/>
    </location>
    <ligand>
        <name>isopentenyl diphosphate</name>
        <dbReference type="ChEBI" id="CHEBI:128769"/>
    </ligand>
</feature>
<feature type="binding site" evidence="1">
    <location>
        <position position="228"/>
    </location>
    <ligand>
        <name>(2E)-4-hydroxy-3-methylbut-2-enyl diphosphate</name>
        <dbReference type="ChEBI" id="CHEBI:128753"/>
    </ligand>
</feature>
<feature type="binding site" evidence="1">
    <location>
        <position position="228"/>
    </location>
    <ligand>
        <name>dimethylallyl diphosphate</name>
        <dbReference type="ChEBI" id="CHEBI:57623"/>
    </ligand>
</feature>
<feature type="binding site" evidence="1">
    <location>
        <position position="228"/>
    </location>
    <ligand>
        <name>isopentenyl diphosphate</name>
        <dbReference type="ChEBI" id="CHEBI:128769"/>
    </ligand>
</feature>
<feature type="binding site" evidence="1">
    <location>
        <position position="229"/>
    </location>
    <ligand>
        <name>(2E)-4-hydroxy-3-methylbut-2-enyl diphosphate</name>
        <dbReference type="ChEBI" id="CHEBI:128753"/>
    </ligand>
</feature>
<feature type="binding site" evidence="1">
    <location>
        <position position="229"/>
    </location>
    <ligand>
        <name>dimethylallyl diphosphate</name>
        <dbReference type="ChEBI" id="CHEBI:57623"/>
    </ligand>
</feature>
<feature type="binding site" evidence="1">
    <location>
        <position position="229"/>
    </location>
    <ligand>
        <name>isopentenyl diphosphate</name>
        <dbReference type="ChEBI" id="CHEBI:128769"/>
    </ligand>
</feature>
<feature type="binding site" evidence="1">
    <location>
        <position position="271"/>
    </location>
    <ligand>
        <name>(2E)-4-hydroxy-3-methylbut-2-enyl diphosphate</name>
        <dbReference type="ChEBI" id="CHEBI:128753"/>
    </ligand>
</feature>
<feature type="binding site" evidence="1">
    <location>
        <position position="271"/>
    </location>
    <ligand>
        <name>dimethylallyl diphosphate</name>
        <dbReference type="ChEBI" id="CHEBI:57623"/>
    </ligand>
</feature>
<feature type="binding site" evidence="1">
    <location>
        <position position="271"/>
    </location>
    <ligand>
        <name>isopentenyl diphosphate</name>
        <dbReference type="ChEBI" id="CHEBI:128769"/>
    </ligand>
</feature>
<name>ISPH_XYLFA</name>
<sequence length="316" mass="34704">MKVLLANPRGFCAGVDRAIEIVKRTIDMLGTPIYVRHEVVHNRFVVDDLKQRGAIFVEELHQVPDGATVIFSAHGVSQAVRRQAAQRGLKVFDATCPLVTKVHLDVARHCRTGRDMILIGHAGHPEVEGTMGQWDQERGTGRIYLVENIDDVATLHVAQPHHLAYTTQTTLSVDDTRNIIDALRQRFPTIQGPKNNDICYATQNRQDAVRELARECDLVLVVGSPNSSNSNRLSELAQREGVASYLIDSAAEIDPAWVIDKHHIGVTAGASAPQVLVDGVLARLYELGATSVSEHSGKPESMVFALPKALRLQLVD</sequence>
<organism>
    <name type="scientific">Xylella fastidiosa (strain 9a5c)</name>
    <dbReference type="NCBI Taxonomy" id="160492"/>
    <lineage>
        <taxon>Bacteria</taxon>
        <taxon>Pseudomonadati</taxon>
        <taxon>Pseudomonadota</taxon>
        <taxon>Gammaproteobacteria</taxon>
        <taxon>Lysobacterales</taxon>
        <taxon>Lysobacteraceae</taxon>
        <taxon>Xylella</taxon>
    </lineage>
</organism>
<proteinExistence type="inferred from homology"/>
<keyword id="KW-0004">4Fe-4S</keyword>
<keyword id="KW-0408">Iron</keyword>
<keyword id="KW-0411">Iron-sulfur</keyword>
<keyword id="KW-0414">Isoprene biosynthesis</keyword>
<keyword id="KW-0479">Metal-binding</keyword>
<keyword id="KW-0560">Oxidoreductase</keyword>
<protein>
    <recommendedName>
        <fullName evidence="1">4-hydroxy-3-methylbut-2-enyl diphosphate reductase</fullName>
        <shortName evidence="1">HMBPP reductase</shortName>
        <ecNumber evidence="1">1.17.7.4</ecNumber>
    </recommendedName>
</protein>
<reference key="1">
    <citation type="journal article" date="2000" name="Nature">
        <title>The genome sequence of the plant pathogen Xylella fastidiosa.</title>
        <authorList>
            <person name="Simpson A.J.G."/>
            <person name="Reinach F.C."/>
            <person name="Arruda P."/>
            <person name="Abreu F.A."/>
            <person name="Acencio M."/>
            <person name="Alvarenga R."/>
            <person name="Alves L.M.C."/>
            <person name="Araya J.E."/>
            <person name="Baia G.S."/>
            <person name="Baptista C.S."/>
            <person name="Barros M.H."/>
            <person name="Bonaccorsi E.D."/>
            <person name="Bordin S."/>
            <person name="Bove J.M."/>
            <person name="Briones M.R.S."/>
            <person name="Bueno M.R.P."/>
            <person name="Camargo A.A."/>
            <person name="Camargo L.E.A."/>
            <person name="Carraro D.M."/>
            <person name="Carrer H."/>
            <person name="Colauto N.B."/>
            <person name="Colombo C."/>
            <person name="Costa F.F."/>
            <person name="Costa M.C.R."/>
            <person name="Costa-Neto C.M."/>
            <person name="Coutinho L.L."/>
            <person name="Cristofani M."/>
            <person name="Dias-Neto E."/>
            <person name="Docena C."/>
            <person name="El-Dorry H."/>
            <person name="Facincani A.P."/>
            <person name="Ferreira A.J.S."/>
            <person name="Ferreira V.C.A."/>
            <person name="Ferro J.A."/>
            <person name="Fraga J.S."/>
            <person name="Franca S.C."/>
            <person name="Franco M.C."/>
            <person name="Frohme M."/>
            <person name="Furlan L.R."/>
            <person name="Garnier M."/>
            <person name="Goldman G.H."/>
            <person name="Goldman M.H.S."/>
            <person name="Gomes S.L."/>
            <person name="Gruber A."/>
            <person name="Ho P.L."/>
            <person name="Hoheisel J.D."/>
            <person name="Junqueira M.L."/>
            <person name="Kemper E.L."/>
            <person name="Kitajima J.P."/>
            <person name="Krieger J.E."/>
            <person name="Kuramae E.E."/>
            <person name="Laigret F."/>
            <person name="Lambais M.R."/>
            <person name="Leite L.C.C."/>
            <person name="Lemos E.G.M."/>
            <person name="Lemos M.V.F."/>
            <person name="Lopes S.A."/>
            <person name="Lopes C.R."/>
            <person name="Machado J.A."/>
            <person name="Machado M.A."/>
            <person name="Madeira A.M.B.N."/>
            <person name="Madeira H.M.F."/>
            <person name="Marino C.L."/>
            <person name="Marques M.V."/>
            <person name="Martins E.A.L."/>
            <person name="Martins E.M.F."/>
            <person name="Matsukuma A.Y."/>
            <person name="Menck C.F.M."/>
            <person name="Miracca E.C."/>
            <person name="Miyaki C.Y."/>
            <person name="Monteiro-Vitorello C.B."/>
            <person name="Moon D.H."/>
            <person name="Nagai M.A."/>
            <person name="Nascimento A.L.T.O."/>
            <person name="Netto L.E.S."/>
            <person name="Nhani A. Jr."/>
            <person name="Nobrega F.G."/>
            <person name="Nunes L.R."/>
            <person name="Oliveira M.A."/>
            <person name="de Oliveira M.C."/>
            <person name="de Oliveira R.C."/>
            <person name="Palmieri D.A."/>
            <person name="Paris A."/>
            <person name="Peixoto B.R."/>
            <person name="Pereira G.A.G."/>
            <person name="Pereira H.A. Jr."/>
            <person name="Pesquero J.B."/>
            <person name="Quaggio R.B."/>
            <person name="Roberto P.G."/>
            <person name="Rodrigues V."/>
            <person name="de Rosa A.J.M."/>
            <person name="de Rosa V.E. Jr."/>
            <person name="de Sa R.G."/>
            <person name="Santelli R.V."/>
            <person name="Sawasaki H.E."/>
            <person name="da Silva A.C.R."/>
            <person name="da Silva A.M."/>
            <person name="da Silva F.R."/>
            <person name="Silva W.A. Jr."/>
            <person name="da Silveira J.F."/>
            <person name="Silvestri M.L.Z."/>
            <person name="Siqueira W.J."/>
            <person name="de Souza A.A."/>
            <person name="de Souza A.P."/>
            <person name="Terenzi M.F."/>
            <person name="Truffi D."/>
            <person name="Tsai S.M."/>
            <person name="Tsuhako M.H."/>
            <person name="Vallada H."/>
            <person name="Van Sluys M.A."/>
            <person name="Verjovski-Almeida S."/>
            <person name="Vettore A.L."/>
            <person name="Zago M.A."/>
            <person name="Zatz M."/>
            <person name="Meidanis J."/>
            <person name="Setubal J.C."/>
        </authorList>
    </citation>
    <scope>NUCLEOTIDE SEQUENCE [LARGE SCALE GENOMIC DNA]</scope>
    <source>
        <strain>9a5c</strain>
    </source>
</reference>
<comment type="function">
    <text evidence="1">Catalyzes the conversion of 1-hydroxy-2-methyl-2-(E)-butenyl 4-diphosphate (HMBPP) into a mixture of isopentenyl diphosphate (IPP) and dimethylallyl diphosphate (DMAPP). Acts in the terminal step of the DOXP/MEP pathway for isoprenoid precursor biosynthesis.</text>
</comment>
<comment type="catalytic activity">
    <reaction evidence="1">
        <text>isopentenyl diphosphate + 2 oxidized [2Fe-2S]-[ferredoxin] + H2O = (2E)-4-hydroxy-3-methylbut-2-enyl diphosphate + 2 reduced [2Fe-2S]-[ferredoxin] + 2 H(+)</text>
        <dbReference type="Rhea" id="RHEA:24488"/>
        <dbReference type="Rhea" id="RHEA-COMP:10000"/>
        <dbReference type="Rhea" id="RHEA-COMP:10001"/>
        <dbReference type="ChEBI" id="CHEBI:15377"/>
        <dbReference type="ChEBI" id="CHEBI:15378"/>
        <dbReference type="ChEBI" id="CHEBI:33737"/>
        <dbReference type="ChEBI" id="CHEBI:33738"/>
        <dbReference type="ChEBI" id="CHEBI:128753"/>
        <dbReference type="ChEBI" id="CHEBI:128769"/>
        <dbReference type="EC" id="1.17.7.4"/>
    </reaction>
</comment>
<comment type="catalytic activity">
    <reaction evidence="1">
        <text>dimethylallyl diphosphate + 2 oxidized [2Fe-2S]-[ferredoxin] + H2O = (2E)-4-hydroxy-3-methylbut-2-enyl diphosphate + 2 reduced [2Fe-2S]-[ferredoxin] + 2 H(+)</text>
        <dbReference type="Rhea" id="RHEA:24825"/>
        <dbReference type="Rhea" id="RHEA-COMP:10000"/>
        <dbReference type="Rhea" id="RHEA-COMP:10001"/>
        <dbReference type="ChEBI" id="CHEBI:15377"/>
        <dbReference type="ChEBI" id="CHEBI:15378"/>
        <dbReference type="ChEBI" id="CHEBI:33737"/>
        <dbReference type="ChEBI" id="CHEBI:33738"/>
        <dbReference type="ChEBI" id="CHEBI:57623"/>
        <dbReference type="ChEBI" id="CHEBI:128753"/>
        <dbReference type="EC" id="1.17.7.4"/>
    </reaction>
</comment>
<comment type="cofactor">
    <cofactor evidence="1">
        <name>[4Fe-4S] cluster</name>
        <dbReference type="ChEBI" id="CHEBI:49883"/>
    </cofactor>
    <text evidence="1">Binds 1 [4Fe-4S] cluster per subunit.</text>
</comment>
<comment type="pathway">
    <text evidence="1">Isoprenoid biosynthesis; dimethylallyl diphosphate biosynthesis; dimethylallyl diphosphate from (2E)-4-hydroxy-3-methylbutenyl diphosphate: step 1/1.</text>
</comment>
<comment type="pathway">
    <text evidence="1">Isoprenoid biosynthesis; isopentenyl diphosphate biosynthesis via DXP pathway; isopentenyl diphosphate from 1-deoxy-D-xylulose 5-phosphate: step 6/6.</text>
</comment>
<comment type="similarity">
    <text evidence="1">Belongs to the IspH family.</text>
</comment>